<accession>Q9C6W9</accession>
<name>FB28_ARATH</name>
<protein>
    <recommendedName>
        <fullName>Putative F-box protein At1g32020</fullName>
    </recommendedName>
</protein>
<reference key="1">
    <citation type="journal article" date="2000" name="Nature">
        <title>Sequence and analysis of chromosome 1 of the plant Arabidopsis thaliana.</title>
        <authorList>
            <person name="Theologis A."/>
            <person name="Ecker J.R."/>
            <person name="Palm C.J."/>
            <person name="Federspiel N.A."/>
            <person name="Kaul S."/>
            <person name="White O."/>
            <person name="Alonso J."/>
            <person name="Altafi H."/>
            <person name="Araujo R."/>
            <person name="Bowman C.L."/>
            <person name="Brooks S.Y."/>
            <person name="Buehler E."/>
            <person name="Chan A."/>
            <person name="Chao Q."/>
            <person name="Chen H."/>
            <person name="Cheuk R.F."/>
            <person name="Chin C.W."/>
            <person name="Chung M.K."/>
            <person name="Conn L."/>
            <person name="Conway A.B."/>
            <person name="Conway A.R."/>
            <person name="Creasy T.H."/>
            <person name="Dewar K."/>
            <person name="Dunn P."/>
            <person name="Etgu P."/>
            <person name="Feldblyum T.V."/>
            <person name="Feng J.-D."/>
            <person name="Fong B."/>
            <person name="Fujii C.Y."/>
            <person name="Gill J.E."/>
            <person name="Goldsmith A.D."/>
            <person name="Haas B."/>
            <person name="Hansen N.F."/>
            <person name="Hughes B."/>
            <person name="Huizar L."/>
            <person name="Hunter J.L."/>
            <person name="Jenkins J."/>
            <person name="Johnson-Hopson C."/>
            <person name="Khan S."/>
            <person name="Khaykin E."/>
            <person name="Kim C.J."/>
            <person name="Koo H.L."/>
            <person name="Kremenetskaia I."/>
            <person name="Kurtz D.B."/>
            <person name="Kwan A."/>
            <person name="Lam B."/>
            <person name="Langin-Hooper S."/>
            <person name="Lee A."/>
            <person name="Lee J.M."/>
            <person name="Lenz C.A."/>
            <person name="Li J.H."/>
            <person name="Li Y.-P."/>
            <person name="Lin X."/>
            <person name="Liu S.X."/>
            <person name="Liu Z.A."/>
            <person name="Luros J.S."/>
            <person name="Maiti R."/>
            <person name="Marziali A."/>
            <person name="Militscher J."/>
            <person name="Miranda M."/>
            <person name="Nguyen M."/>
            <person name="Nierman W.C."/>
            <person name="Osborne B.I."/>
            <person name="Pai G."/>
            <person name="Peterson J."/>
            <person name="Pham P.K."/>
            <person name="Rizzo M."/>
            <person name="Rooney T."/>
            <person name="Rowley D."/>
            <person name="Sakano H."/>
            <person name="Salzberg S.L."/>
            <person name="Schwartz J.R."/>
            <person name="Shinn P."/>
            <person name="Southwick A.M."/>
            <person name="Sun H."/>
            <person name="Tallon L.J."/>
            <person name="Tambunga G."/>
            <person name="Toriumi M.J."/>
            <person name="Town C.D."/>
            <person name="Utterback T."/>
            <person name="Van Aken S."/>
            <person name="Vaysberg M."/>
            <person name="Vysotskaia V.S."/>
            <person name="Walker M."/>
            <person name="Wu D."/>
            <person name="Yu G."/>
            <person name="Fraser C.M."/>
            <person name="Venter J.C."/>
            <person name="Davis R.W."/>
        </authorList>
    </citation>
    <scope>NUCLEOTIDE SEQUENCE [LARGE SCALE GENOMIC DNA]</scope>
    <source>
        <strain>cv. Columbia</strain>
    </source>
</reference>
<reference key="2">
    <citation type="journal article" date="2017" name="Plant J.">
        <title>Araport11: a complete reannotation of the Arabidopsis thaliana reference genome.</title>
        <authorList>
            <person name="Cheng C.Y."/>
            <person name="Krishnakumar V."/>
            <person name="Chan A.P."/>
            <person name="Thibaud-Nissen F."/>
            <person name="Schobel S."/>
            <person name="Town C.D."/>
        </authorList>
    </citation>
    <scope>GENOME REANNOTATION</scope>
    <source>
        <strain>cv. Columbia</strain>
    </source>
</reference>
<gene>
    <name type="ordered locus">At1g32020</name>
    <name type="ORF">T12O21.8</name>
</gene>
<sequence length="171" mass="19495">MECDRISTLPDHLVAKIVSYLGIKDSIKTSVLSKRWEFVWLKVVGLDLKNCDFPPNGIASQMVVNKYMEFNSGLHMQYFKVNFGGNTVCTNRFLEWIATAVDRGVQHLDAENKNPVIIKEFMPKKIYKSKTLVSLKLAIKIFLKARHFISVFIVLQGQSIVQFSSRCGTFS</sequence>
<keyword id="KW-1185">Reference proteome</keyword>
<dbReference type="EMBL" id="AC074309">
    <property type="protein sequence ID" value="AAG50789.1"/>
    <property type="molecule type" value="Genomic_DNA"/>
</dbReference>
<dbReference type="EMBL" id="CP002684">
    <property type="protein sequence ID" value="AEE31427.1"/>
    <property type="molecule type" value="Genomic_DNA"/>
</dbReference>
<dbReference type="PIR" id="D86444">
    <property type="entry name" value="D86444"/>
</dbReference>
<dbReference type="RefSeq" id="NP_174482.1">
    <property type="nucleotide sequence ID" value="NM_102936.1"/>
</dbReference>
<dbReference type="PaxDb" id="3702-AT1G32020.1"/>
<dbReference type="DNASU" id="840093"/>
<dbReference type="EnsemblPlants" id="AT1G32020.1">
    <property type="protein sequence ID" value="AT1G32020.1"/>
    <property type="gene ID" value="AT1G32020"/>
</dbReference>
<dbReference type="GeneID" id="840093"/>
<dbReference type="Gramene" id="AT1G32020.1">
    <property type="protein sequence ID" value="AT1G32020.1"/>
    <property type="gene ID" value="AT1G32020"/>
</dbReference>
<dbReference type="KEGG" id="ath:AT1G32020"/>
<dbReference type="Araport" id="AT1G32020"/>
<dbReference type="TAIR" id="AT1G32020"/>
<dbReference type="HOGENOM" id="CLU_1565010_0_0_1"/>
<dbReference type="InParanoid" id="Q9C6W9"/>
<dbReference type="OMA" id="ICTTIMR"/>
<dbReference type="PhylomeDB" id="Q9C6W9"/>
<dbReference type="PRO" id="PR:Q9C6W9"/>
<dbReference type="Proteomes" id="UP000006548">
    <property type="component" value="Chromosome 1"/>
</dbReference>
<dbReference type="CDD" id="cd22160">
    <property type="entry name" value="F-box_AtFBL13-like"/>
    <property type="match status" value="1"/>
</dbReference>
<dbReference type="Gene3D" id="1.20.1280.50">
    <property type="match status" value="1"/>
</dbReference>
<dbReference type="InterPro" id="IPR036047">
    <property type="entry name" value="F-box-like_dom_sf"/>
</dbReference>
<dbReference type="InterPro" id="IPR053781">
    <property type="entry name" value="F-box_AtFBL13-like"/>
</dbReference>
<dbReference type="InterPro" id="IPR001810">
    <property type="entry name" value="F-box_dom"/>
</dbReference>
<dbReference type="InterPro" id="IPR055294">
    <property type="entry name" value="FBL60-like"/>
</dbReference>
<dbReference type="PANTHER" id="PTHR31293">
    <property type="entry name" value="RNI-LIKE SUPERFAMILY PROTEIN"/>
    <property type="match status" value="1"/>
</dbReference>
<dbReference type="PANTHER" id="PTHR31293:SF16">
    <property type="entry name" value="RNI-LIKE SUPERFAMILY PROTEIN"/>
    <property type="match status" value="1"/>
</dbReference>
<dbReference type="Pfam" id="PF00646">
    <property type="entry name" value="F-box"/>
    <property type="match status" value="1"/>
</dbReference>
<dbReference type="SUPFAM" id="SSF81383">
    <property type="entry name" value="F-box domain"/>
    <property type="match status" value="1"/>
</dbReference>
<organism>
    <name type="scientific">Arabidopsis thaliana</name>
    <name type="common">Mouse-ear cress</name>
    <dbReference type="NCBI Taxonomy" id="3702"/>
    <lineage>
        <taxon>Eukaryota</taxon>
        <taxon>Viridiplantae</taxon>
        <taxon>Streptophyta</taxon>
        <taxon>Embryophyta</taxon>
        <taxon>Tracheophyta</taxon>
        <taxon>Spermatophyta</taxon>
        <taxon>Magnoliopsida</taxon>
        <taxon>eudicotyledons</taxon>
        <taxon>Gunneridae</taxon>
        <taxon>Pentapetalae</taxon>
        <taxon>rosids</taxon>
        <taxon>malvids</taxon>
        <taxon>Brassicales</taxon>
        <taxon>Brassicaceae</taxon>
        <taxon>Camelineae</taxon>
        <taxon>Arabidopsis</taxon>
    </lineage>
</organism>
<feature type="chain" id="PRO_0000283304" description="Putative F-box protein At1g32020">
    <location>
        <begin position="1"/>
        <end position="171"/>
    </location>
</feature>
<feature type="domain" description="F-box">
    <location>
        <begin position="3"/>
        <end position="49"/>
    </location>
</feature>
<proteinExistence type="predicted"/>